<sequence length="227" mass="24746">MTAIAPVITIDGPSGAGKGTLCKAMAEALQWHLLDSGAIYRVLALAALHHHVDVASEDALVPLASHLDVRFVSTNGNLEVILEGEDVSGEIRTQEVANAASQVAAFPRVREALLRRQRAFRELPGLIADGRDMGTVVFPDAPVKIFLDASSEERAHRRMLQLQEKGFSVNFERLLAEIKERDDRDRNRAVAPLVPAADALVLDSTTLSIEQVIEKALQYARQKLALA</sequence>
<keyword id="KW-0067">ATP-binding</keyword>
<keyword id="KW-0963">Cytoplasm</keyword>
<keyword id="KW-0418">Kinase</keyword>
<keyword id="KW-0547">Nucleotide-binding</keyword>
<keyword id="KW-0808">Transferase</keyword>
<comment type="catalytic activity">
    <reaction evidence="1">
        <text>CMP + ATP = CDP + ADP</text>
        <dbReference type="Rhea" id="RHEA:11600"/>
        <dbReference type="ChEBI" id="CHEBI:30616"/>
        <dbReference type="ChEBI" id="CHEBI:58069"/>
        <dbReference type="ChEBI" id="CHEBI:60377"/>
        <dbReference type="ChEBI" id="CHEBI:456216"/>
        <dbReference type="EC" id="2.7.4.25"/>
    </reaction>
</comment>
<comment type="catalytic activity">
    <reaction evidence="1">
        <text>dCMP + ATP = dCDP + ADP</text>
        <dbReference type="Rhea" id="RHEA:25094"/>
        <dbReference type="ChEBI" id="CHEBI:30616"/>
        <dbReference type="ChEBI" id="CHEBI:57566"/>
        <dbReference type="ChEBI" id="CHEBI:58593"/>
        <dbReference type="ChEBI" id="CHEBI:456216"/>
        <dbReference type="EC" id="2.7.4.25"/>
    </reaction>
</comment>
<comment type="subcellular location">
    <subcellularLocation>
        <location evidence="1">Cytoplasm</location>
    </subcellularLocation>
</comment>
<comment type="similarity">
    <text evidence="1">Belongs to the cytidylate kinase family. Type 1 subfamily.</text>
</comment>
<name>KCY_ECOLU</name>
<dbReference type="EC" id="2.7.4.25" evidence="1"/>
<dbReference type="EMBL" id="CU928163">
    <property type="protein sequence ID" value="CAR12312.1"/>
    <property type="molecule type" value="Genomic_DNA"/>
</dbReference>
<dbReference type="RefSeq" id="WP_000125016.1">
    <property type="nucleotide sequence ID" value="NC_011751.1"/>
</dbReference>
<dbReference type="RefSeq" id="YP_002411856.1">
    <property type="nucleotide sequence ID" value="NC_011751.1"/>
</dbReference>
<dbReference type="SMR" id="B7NAQ9"/>
<dbReference type="STRING" id="585056.ECUMN_1103"/>
<dbReference type="GeneID" id="93776507"/>
<dbReference type="KEGG" id="eum:ECUMN_1103"/>
<dbReference type="PATRIC" id="fig|585056.7.peg.1298"/>
<dbReference type="HOGENOM" id="CLU_079959_0_2_6"/>
<dbReference type="Proteomes" id="UP000007097">
    <property type="component" value="Chromosome"/>
</dbReference>
<dbReference type="GO" id="GO:0005829">
    <property type="term" value="C:cytosol"/>
    <property type="evidence" value="ECO:0007669"/>
    <property type="project" value="TreeGrafter"/>
</dbReference>
<dbReference type="GO" id="GO:0005524">
    <property type="term" value="F:ATP binding"/>
    <property type="evidence" value="ECO:0007669"/>
    <property type="project" value="UniProtKB-UniRule"/>
</dbReference>
<dbReference type="GO" id="GO:0036430">
    <property type="term" value="F:CMP kinase activity"/>
    <property type="evidence" value="ECO:0007669"/>
    <property type="project" value="RHEA"/>
</dbReference>
<dbReference type="GO" id="GO:0036431">
    <property type="term" value="F:dCMP kinase activity"/>
    <property type="evidence" value="ECO:0007669"/>
    <property type="project" value="RHEA"/>
</dbReference>
<dbReference type="GO" id="GO:0015949">
    <property type="term" value="P:nucleobase-containing small molecule interconversion"/>
    <property type="evidence" value="ECO:0007669"/>
    <property type="project" value="TreeGrafter"/>
</dbReference>
<dbReference type="GO" id="GO:0006220">
    <property type="term" value="P:pyrimidine nucleotide metabolic process"/>
    <property type="evidence" value="ECO:0007669"/>
    <property type="project" value="UniProtKB-UniRule"/>
</dbReference>
<dbReference type="CDD" id="cd02020">
    <property type="entry name" value="CMPK"/>
    <property type="match status" value="1"/>
</dbReference>
<dbReference type="FunFam" id="3.40.50.300:FF:000262">
    <property type="entry name" value="Cytidylate kinase"/>
    <property type="match status" value="1"/>
</dbReference>
<dbReference type="Gene3D" id="3.40.50.300">
    <property type="entry name" value="P-loop containing nucleotide triphosphate hydrolases"/>
    <property type="match status" value="1"/>
</dbReference>
<dbReference type="HAMAP" id="MF_00238">
    <property type="entry name" value="Cytidyl_kinase_type1"/>
    <property type="match status" value="1"/>
</dbReference>
<dbReference type="InterPro" id="IPR003136">
    <property type="entry name" value="Cytidylate_kin"/>
</dbReference>
<dbReference type="InterPro" id="IPR011994">
    <property type="entry name" value="Cytidylate_kinase_dom"/>
</dbReference>
<dbReference type="InterPro" id="IPR027417">
    <property type="entry name" value="P-loop_NTPase"/>
</dbReference>
<dbReference type="NCBIfam" id="TIGR00017">
    <property type="entry name" value="cmk"/>
    <property type="match status" value="1"/>
</dbReference>
<dbReference type="PANTHER" id="PTHR21299:SF2">
    <property type="entry name" value="CYTIDYLATE KINASE"/>
    <property type="match status" value="1"/>
</dbReference>
<dbReference type="PANTHER" id="PTHR21299">
    <property type="entry name" value="CYTIDYLATE KINASE/PANTOATE-BETA-ALANINE LIGASE"/>
    <property type="match status" value="1"/>
</dbReference>
<dbReference type="Pfam" id="PF02224">
    <property type="entry name" value="Cytidylate_kin"/>
    <property type="match status" value="1"/>
</dbReference>
<dbReference type="SUPFAM" id="SSF52540">
    <property type="entry name" value="P-loop containing nucleoside triphosphate hydrolases"/>
    <property type="match status" value="1"/>
</dbReference>
<evidence type="ECO:0000255" key="1">
    <source>
        <dbReference type="HAMAP-Rule" id="MF_00238"/>
    </source>
</evidence>
<organism>
    <name type="scientific">Escherichia coli O17:K52:H18 (strain UMN026 / ExPEC)</name>
    <dbReference type="NCBI Taxonomy" id="585056"/>
    <lineage>
        <taxon>Bacteria</taxon>
        <taxon>Pseudomonadati</taxon>
        <taxon>Pseudomonadota</taxon>
        <taxon>Gammaproteobacteria</taxon>
        <taxon>Enterobacterales</taxon>
        <taxon>Enterobacteriaceae</taxon>
        <taxon>Escherichia</taxon>
    </lineage>
</organism>
<proteinExistence type="inferred from homology"/>
<accession>B7NAQ9</accession>
<reference key="1">
    <citation type="journal article" date="2009" name="PLoS Genet.">
        <title>Organised genome dynamics in the Escherichia coli species results in highly diverse adaptive paths.</title>
        <authorList>
            <person name="Touchon M."/>
            <person name="Hoede C."/>
            <person name="Tenaillon O."/>
            <person name="Barbe V."/>
            <person name="Baeriswyl S."/>
            <person name="Bidet P."/>
            <person name="Bingen E."/>
            <person name="Bonacorsi S."/>
            <person name="Bouchier C."/>
            <person name="Bouvet O."/>
            <person name="Calteau A."/>
            <person name="Chiapello H."/>
            <person name="Clermont O."/>
            <person name="Cruveiller S."/>
            <person name="Danchin A."/>
            <person name="Diard M."/>
            <person name="Dossat C."/>
            <person name="Karoui M.E."/>
            <person name="Frapy E."/>
            <person name="Garry L."/>
            <person name="Ghigo J.M."/>
            <person name="Gilles A.M."/>
            <person name="Johnson J."/>
            <person name="Le Bouguenec C."/>
            <person name="Lescat M."/>
            <person name="Mangenot S."/>
            <person name="Martinez-Jehanne V."/>
            <person name="Matic I."/>
            <person name="Nassif X."/>
            <person name="Oztas S."/>
            <person name="Petit M.A."/>
            <person name="Pichon C."/>
            <person name="Rouy Z."/>
            <person name="Ruf C.S."/>
            <person name="Schneider D."/>
            <person name="Tourret J."/>
            <person name="Vacherie B."/>
            <person name="Vallenet D."/>
            <person name="Medigue C."/>
            <person name="Rocha E.P.C."/>
            <person name="Denamur E."/>
        </authorList>
    </citation>
    <scope>NUCLEOTIDE SEQUENCE [LARGE SCALE GENOMIC DNA]</scope>
    <source>
        <strain>UMN026 / ExPEC</strain>
    </source>
</reference>
<feature type="chain" id="PRO_1000119016" description="Cytidylate kinase">
    <location>
        <begin position="1"/>
        <end position="227"/>
    </location>
</feature>
<feature type="binding site" evidence="1">
    <location>
        <begin position="12"/>
        <end position="20"/>
    </location>
    <ligand>
        <name>ATP</name>
        <dbReference type="ChEBI" id="CHEBI:30616"/>
    </ligand>
</feature>
<gene>
    <name evidence="1" type="primary">cmk</name>
    <name type="ordered locus">ECUMN_1103</name>
</gene>
<protein>
    <recommendedName>
        <fullName evidence="1">Cytidylate kinase</fullName>
        <shortName evidence="1">CK</shortName>
        <ecNumber evidence="1">2.7.4.25</ecNumber>
    </recommendedName>
    <alternativeName>
        <fullName evidence="1">Cytidine monophosphate kinase</fullName>
        <shortName evidence="1">CMP kinase</shortName>
    </alternativeName>
</protein>